<comment type="function">
    <text evidence="1 2">Transcription repressor. Interacts specifically with the W box (5'-(T)TGAC[CT]-3'), a frequently occurring elicitor-responsive cis-acting element. Regulates, probably indirectly, the activation of defense-related genes during defense response (By similarity). Negatively regulates basal innate immunity and XA21-mediated defense against X.oryzae pv. oryzae (Xoo) (By similarity).</text>
</comment>
<comment type="subunit">
    <text evidence="8">Interacts with XA21 in the nucleus.</text>
</comment>
<comment type="subcellular location">
    <subcellularLocation>
        <location evidence="2 4">Nucleus</location>
    </subcellularLocation>
</comment>
<comment type="alternative products">
    <event type="alternative splicing"/>
    <isoform>
        <id>B8BF91-1</id>
        <name>1</name>
        <sequence type="displayed"/>
    </isoform>
    <isoform>
        <id>B8BF91-2</id>
        <name>2</name>
        <sequence type="described" ref="VSP_058457"/>
    </isoform>
</comment>
<comment type="induction">
    <text evidence="1 7 10">Might be activated by XA21 in the nucleus upon pathogen infection (PubMed:20118235). Induced by biotic elicitors (e.g. fungal chitin oligosaccharide) (By similarity). Induced by pathogen infection (e.g. M.grisea and X.oryzae pv. oryzae (Xoo)). Accumulates after treatment with benzothiadiazole (BTH) and salicylic acid (SA) (PubMed:16528562). Transactivated by WRKY45 (By similarity).</text>
</comment>
<comment type="domain">
    <text evidence="2">The WRKY domain is required to bind DNA.</text>
</comment>
<comment type="similarity">
    <text evidence="11">Belongs to the WRKY group II-a family.</text>
</comment>
<proteinExistence type="evidence at protein level"/>
<accession>B8BF91</accession>
<accession>Q6IEL9</accession>
<name>WRK62_ORYSI</name>
<evidence type="ECO:0000250" key="1">
    <source>
        <dbReference type="UniProtKB" id="Q6EPZ0"/>
    </source>
</evidence>
<evidence type="ECO:0000250" key="2">
    <source>
        <dbReference type="UniProtKB" id="Q6QHD1"/>
    </source>
</evidence>
<evidence type="ECO:0000255" key="3"/>
<evidence type="ECO:0000255" key="4">
    <source>
        <dbReference type="PROSITE-ProRule" id="PRU00223"/>
    </source>
</evidence>
<evidence type="ECO:0000255" key="5">
    <source>
        <dbReference type="PROSITE-ProRule" id="PRU00289"/>
    </source>
</evidence>
<evidence type="ECO:0000256" key="6">
    <source>
        <dbReference type="SAM" id="MobiDB-lite"/>
    </source>
</evidence>
<evidence type="ECO:0000269" key="7">
    <source>
    </source>
</evidence>
<evidence type="ECO:0000269" key="8">
    <source>
    </source>
</evidence>
<evidence type="ECO:0000303" key="9">
    <source>
    </source>
</evidence>
<evidence type="ECO:0000303" key="10">
    <source>
    </source>
</evidence>
<evidence type="ECO:0000305" key="11"/>
<evidence type="ECO:0000312" key="12">
    <source>
        <dbReference type="EMBL" id="EEC84578.1"/>
    </source>
</evidence>
<reference key="1">
    <citation type="journal article" date="2004" name="Plant Physiol.">
        <title>A rice WRKY gene encodes a transcriptional repressor of the gibberellin signaling pathway in aleurone cells.</title>
        <authorList>
            <person name="Zhang Z.-L."/>
            <person name="Xie Z."/>
            <person name="Zou X."/>
            <person name="Casaretto J."/>
            <person name="Ho T.-H.D."/>
            <person name="Shen Q.J."/>
        </authorList>
    </citation>
    <scope>NUCLEOTIDE SEQUENCE [GENOMIC DNA]</scope>
</reference>
<reference key="2">
    <citation type="journal article" date="2005" name="PLoS Biol.">
        <title>The genomes of Oryza sativa: a history of duplications.</title>
        <authorList>
            <person name="Yu J."/>
            <person name="Wang J."/>
            <person name="Lin W."/>
            <person name="Li S."/>
            <person name="Li H."/>
            <person name="Zhou J."/>
            <person name="Ni P."/>
            <person name="Dong W."/>
            <person name="Hu S."/>
            <person name="Zeng C."/>
            <person name="Zhang J."/>
            <person name="Zhang Y."/>
            <person name="Li R."/>
            <person name="Xu Z."/>
            <person name="Li S."/>
            <person name="Li X."/>
            <person name="Zheng H."/>
            <person name="Cong L."/>
            <person name="Lin L."/>
            <person name="Yin J."/>
            <person name="Geng J."/>
            <person name="Li G."/>
            <person name="Shi J."/>
            <person name="Liu J."/>
            <person name="Lv H."/>
            <person name="Li J."/>
            <person name="Wang J."/>
            <person name="Deng Y."/>
            <person name="Ran L."/>
            <person name="Shi X."/>
            <person name="Wang X."/>
            <person name="Wu Q."/>
            <person name="Li C."/>
            <person name="Ren X."/>
            <person name="Wang J."/>
            <person name="Wang X."/>
            <person name="Li D."/>
            <person name="Liu D."/>
            <person name="Zhang X."/>
            <person name="Ji Z."/>
            <person name="Zhao W."/>
            <person name="Sun Y."/>
            <person name="Zhang Z."/>
            <person name="Bao J."/>
            <person name="Han Y."/>
            <person name="Dong L."/>
            <person name="Ji J."/>
            <person name="Chen P."/>
            <person name="Wu S."/>
            <person name="Liu J."/>
            <person name="Xiao Y."/>
            <person name="Bu D."/>
            <person name="Tan J."/>
            <person name="Yang L."/>
            <person name="Ye C."/>
            <person name="Zhang J."/>
            <person name="Xu J."/>
            <person name="Zhou Y."/>
            <person name="Yu Y."/>
            <person name="Zhang B."/>
            <person name="Zhuang S."/>
            <person name="Wei H."/>
            <person name="Liu B."/>
            <person name="Lei M."/>
            <person name="Yu H."/>
            <person name="Li Y."/>
            <person name="Xu H."/>
            <person name="Wei S."/>
            <person name="He X."/>
            <person name="Fang L."/>
            <person name="Zhang Z."/>
            <person name="Zhang Y."/>
            <person name="Huang X."/>
            <person name="Su Z."/>
            <person name="Tong W."/>
            <person name="Li J."/>
            <person name="Tong Z."/>
            <person name="Li S."/>
            <person name="Ye J."/>
            <person name="Wang L."/>
            <person name="Fang L."/>
            <person name="Lei T."/>
            <person name="Chen C.-S."/>
            <person name="Chen H.-C."/>
            <person name="Xu Z."/>
            <person name="Li H."/>
            <person name="Huang H."/>
            <person name="Zhang F."/>
            <person name="Xu H."/>
            <person name="Li N."/>
            <person name="Zhao C."/>
            <person name="Li S."/>
            <person name="Dong L."/>
            <person name="Huang Y."/>
            <person name="Li L."/>
            <person name="Xi Y."/>
            <person name="Qi Q."/>
            <person name="Li W."/>
            <person name="Zhang B."/>
            <person name="Hu W."/>
            <person name="Zhang Y."/>
            <person name="Tian X."/>
            <person name="Jiao Y."/>
            <person name="Liang X."/>
            <person name="Jin J."/>
            <person name="Gao L."/>
            <person name="Zheng W."/>
            <person name="Hao B."/>
            <person name="Liu S.-M."/>
            <person name="Wang W."/>
            <person name="Yuan L."/>
            <person name="Cao M."/>
            <person name="McDermott J."/>
            <person name="Samudrala R."/>
            <person name="Wang J."/>
            <person name="Wong G.K.-S."/>
            <person name="Yang H."/>
        </authorList>
    </citation>
    <scope>NUCLEOTIDE SEQUENCE [LARGE SCALE GENOMIC DNA]</scope>
    <source>
        <strain>cv. 93-11</strain>
    </source>
</reference>
<reference key="3">
    <citation type="journal article" date="2005" name="Plant Physiol.">
        <title>Annotations and functional analyses of the rice WRKY gene superfamily reveal positive and negative regulators of abscisic acid signaling in aleurone cells.</title>
        <authorList>
            <person name="Xie Z."/>
            <person name="Zhang Z.-L."/>
            <person name="Zou X."/>
            <person name="Huang J."/>
            <person name="Ruas P."/>
            <person name="Thompson D."/>
            <person name="Shen Q.J."/>
        </authorList>
    </citation>
    <scope>GENE FAMILY</scope>
    <scope>NOMENCLATURE</scope>
</reference>
<reference key="4">
    <citation type="journal article" date="2006" name="Plant Cell Rep.">
        <title>A comprehensive expression analysis of the WRKY gene superfamily in rice plants during defense response.</title>
        <authorList>
            <person name="Ryu H.-S."/>
            <person name="Han M."/>
            <person name="Lee S.-K."/>
            <person name="Cho J.-I."/>
            <person name="Ryoo N."/>
            <person name="Heu S."/>
            <person name="Lee Y.-H."/>
            <person name="Bhoo S.H."/>
            <person name="Wang G.-L."/>
            <person name="Hahn T.-R."/>
            <person name="Jeon J.-S."/>
        </authorList>
    </citation>
    <scope>INDUCTION BY SALICYLIC ACID; MAGNAPORTHE GRISEA AND XANTHOMONAS ORYZAE</scope>
</reference>
<reference key="5">
    <citation type="journal article" date="2010" name="J. Biol. Chem.">
        <title>A conserved threonine residue in the juxtamembrane domain of the XA21 pattern recognition receptor is critical for kinase autophosphorylation and XA21-mediated immunity.</title>
        <authorList>
            <person name="Chen X."/>
            <person name="Chern M."/>
            <person name="Canlas P.E."/>
            <person name="Jiang C."/>
            <person name="Ruan D."/>
            <person name="Cao P."/>
            <person name="Ronald P.C."/>
        </authorList>
    </citation>
    <scope>INTERACTION WITH XA21</scope>
    <scope>INDUCTION BY XA21</scope>
</reference>
<organism>
    <name type="scientific">Oryza sativa subsp. indica</name>
    <name type="common">Rice</name>
    <dbReference type="NCBI Taxonomy" id="39946"/>
    <lineage>
        <taxon>Eukaryota</taxon>
        <taxon>Viridiplantae</taxon>
        <taxon>Streptophyta</taxon>
        <taxon>Embryophyta</taxon>
        <taxon>Tracheophyta</taxon>
        <taxon>Spermatophyta</taxon>
        <taxon>Magnoliopsida</taxon>
        <taxon>Liliopsida</taxon>
        <taxon>Poales</taxon>
        <taxon>Poaceae</taxon>
        <taxon>BOP clade</taxon>
        <taxon>Oryzoideae</taxon>
        <taxon>Oryzeae</taxon>
        <taxon>Oryzinae</taxon>
        <taxon>Oryza</taxon>
        <taxon>Oryza sativa</taxon>
    </lineage>
</organism>
<sequence>MDDDGDGSSSPTDDSAAAGLLPLFSRSPAEDLEEKLRRAMEENARLTRALDAILAGHHAHQRALLAPSLSPPPPSATARAPSVSTSCAAREDAAPAVAAAAASTACPSRQQPPTAEPRPKVRTVRVRADAADATDANSMAETVKDGYQWRKYGQKVTRDNPYPRAYFRCAFAPSCPVKKKLQRCAEDRSMLVATYEGEHNHALSTQTTEFVASGCTTSQHAGGSSSSPLPCSISINSSGRTITLDLTNQAGSGSIASCGVEAAAVSGELVTVLSPELRRHLVEEVVQVLKNDAEFVEAVTNAVAARVVDQIPHIPVHL</sequence>
<feature type="chain" id="PRO_0000436957" description="WRKY transcription factor WRKY62">
    <location>
        <begin position="1"/>
        <end position="318"/>
    </location>
</feature>
<feature type="DNA-binding region" description="WRKY" evidence="4">
    <location>
        <begin position="138"/>
        <end position="204"/>
    </location>
</feature>
<feature type="region of interest" description="Disordered" evidence="6">
    <location>
        <begin position="1"/>
        <end position="27"/>
    </location>
</feature>
<feature type="region of interest" description="Disordered" evidence="6">
    <location>
        <begin position="65"/>
        <end position="86"/>
    </location>
</feature>
<feature type="region of interest" description="Disordered" evidence="6">
    <location>
        <begin position="100"/>
        <end position="136"/>
    </location>
</feature>
<feature type="coiled-coil region" evidence="3">
    <location>
        <begin position="29"/>
        <end position="49"/>
    </location>
</feature>
<feature type="compositionally biased region" description="Low complexity" evidence="6">
    <location>
        <begin position="7"/>
        <end position="19"/>
    </location>
</feature>
<feature type="compositionally biased region" description="Low complexity" evidence="6">
    <location>
        <begin position="76"/>
        <end position="86"/>
    </location>
</feature>
<feature type="binding site" evidence="5">
    <location>
        <begin position="259"/>
        <end position="266"/>
    </location>
    <ligand>
        <name>ATP</name>
        <dbReference type="ChEBI" id="CHEBI:30616"/>
    </ligand>
</feature>
<feature type="splice variant" id="VSP_058457" description="In isoform 2.">
    <location>
        <begin position="1"/>
        <end position="39"/>
    </location>
</feature>
<dbReference type="EMBL" id="BK005065">
    <property type="protein sequence ID" value="DAA05127.1"/>
    <property type="molecule type" value="Genomic_DNA"/>
</dbReference>
<dbReference type="EMBL" id="CM000134">
    <property type="protein sequence ID" value="EEC84578.1"/>
    <property type="molecule type" value="Genomic_DNA"/>
</dbReference>
<dbReference type="SMR" id="B8BF91"/>
<dbReference type="STRING" id="39946.B8BF91"/>
<dbReference type="EnsemblPlants" id="BGIOSGA029757-TA">
    <molecule id="B8BF91-1"/>
    <property type="protein sequence ID" value="BGIOSGA029757-PA"/>
    <property type="gene ID" value="BGIOSGA029757"/>
</dbReference>
<dbReference type="Gramene" id="BGIOSGA029757-TA">
    <molecule id="B8BF91-1"/>
    <property type="protein sequence ID" value="BGIOSGA029757-PA"/>
    <property type="gene ID" value="BGIOSGA029757"/>
</dbReference>
<dbReference type="HOGENOM" id="CLU_047067_0_1_1"/>
<dbReference type="OMA" id="MWITIIL"/>
<dbReference type="Proteomes" id="UP000007015">
    <property type="component" value="Chromosome 9"/>
</dbReference>
<dbReference type="GO" id="GO:0005634">
    <property type="term" value="C:nucleus"/>
    <property type="evidence" value="ECO:0007669"/>
    <property type="project" value="UniProtKB-SubCell"/>
</dbReference>
<dbReference type="GO" id="GO:0005524">
    <property type="term" value="F:ATP binding"/>
    <property type="evidence" value="ECO:0007669"/>
    <property type="project" value="UniProtKB-KW"/>
</dbReference>
<dbReference type="GO" id="GO:0003700">
    <property type="term" value="F:DNA-binding transcription factor activity"/>
    <property type="evidence" value="ECO:0007669"/>
    <property type="project" value="InterPro"/>
</dbReference>
<dbReference type="GO" id="GO:0043565">
    <property type="term" value="F:sequence-specific DNA binding"/>
    <property type="evidence" value="ECO:0007669"/>
    <property type="project" value="InterPro"/>
</dbReference>
<dbReference type="GO" id="GO:0006952">
    <property type="term" value="P:defense response"/>
    <property type="evidence" value="ECO:0007669"/>
    <property type="project" value="UniProtKB-KW"/>
</dbReference>
<dbReference type="GO" id="GO:1900425">
    <property type="term" value="P:negative regulation of defense response to bacterium"/>
    <property type="evidence" value="ECO:0007669"/>
    <property type="project" value="EnsemblPlants"/>
</dbReference>
<dbReference type="GO" id="GO:0009617">
    <property type="term" value="P:response to bacterium"/>
    <property type="evidence" value="ECO:0000270"/>
    <property type="project" value="UniProtKB"/>
</dbReference>
<dbReference type="GO" id="GO:0010200">
    <property type="term" value="P:response to chitin"/>
    <property type="evidence" value="ECO:0000250"/>
    <property type="project" value="UniProtKB"/>
</dbReference>
<dbReference type="GO" id="GO:0009620">
    <property type="term" value="P:response to fungus"/>
    <property type="evidence" value="ECO:0000270"/>
    <property type="project" value="UniProtKB"/>
</dbReference>
<dbReference type="GO" id="GO:0009751">
    <property type="term" value="P:response to salicylic acid"/>
    <property type="evidence" value="ECO:0000270"/>
    <property type="project" value="UniProtKB"/>
</dbReference>
<dbReference type="FunFam" id="2.20.25.80:FF:000008">
    <property type="entry name" value="WRKY transcription factor 40"/>
    <property type="match status" value="1"/>
</dbReference>
<dbReference type="Gene3D" id="2.20.25.80">
    <property type="entry name" value="WRKY domain"/>
    <property type="match status" value="1"/>
</dbReference>
<dbReference type="InterPro" id="IPR003657">
    <property type="entry name" value="WRKY_dom"/>
</dbReference>
<dbReference type="InterPro" id="IPR036576">
    <property type="entry name" value="WRKY_dom_sf"/>
</dbReference>
<dbReference type="InterPro" id="IPR044810">
    <property type="entry name" value="WRKY_plant"/>
</dbReference>
<dbReference type="PANTHER" id="PTHR31429">
    <property type="entry name" value="WRKY TRANSCRIPTION FACTOR 36-RELATED"/>
    <property type="match status" value="1"/>
</dbReference>
<dbReference type="PANTHER" id="PTHR31429:SF84">
    <property type="entry name" value="WRKY TRANSCRIPTION FACTOR WRKY62"/>
    <property type="match status" value="1"/>
</dbReference>
<dbReference type="Pfam" id="PF03106">
    <property type="entry name" value="WRKY"/>
    <property type="match status" value="1"/>
</dbReference>
<dbReference type="SMART" id="SM00774">
    <property type="entry name" value="WRKY"/>
    <property type="match status" value="1"/>
</dbReference>
<dbReference type="SUPFAM" id="SSF118290">
    <property type="entry name" value="WRKY DNA-binding domain"/>
    <property type="match status" value="1"/>
</dbReference>
<dbReference type="PROSITE" id="PS50811">
    <property type="entry name" value="WRKY"/>
    <property type="match status" value="1"/>
</dbReference>
<keyword id="KW-0025">Alternative splicing</keyword>
<keyword id="KW-0067">ATP-binding</keyword>
<keyword id="KW-0175">Coiled coil</keyword>
<keyword id="KW-0238">DNA-binding</keyword>
<keyword id="KW-0547">Nucleotide-binding</keyword>
<keyword id="KW-0539">Nucleus</keyword>
<keyword id="KW-0611">Plant defense</keyword>
<keyword id="KW-1185">Reference proteome</keyword>
<keyword id="KW-0804">Transcription</keyword>
<keyword id="KW-0805">Transcription regulation</keyword>
<gene>
    <name evidence="9" type="primary">WRKY62</name>
    <name evidence="10" type="synonym">XB10</name>
    <name evidence="12" type="ORF">OsI_31380</name>
</gene>
<protein>
    <recommendedName>
        <fullName evidence="9">WRKY transcription factor WRKY62</fullName>
        <shortName evidence="9">OsWRKY62</shortName>
    </recommendedName>
    <alternativeName>
        <fullName evidence="10">XA21-binding protein 10</fullName>
    </alternativeName>
</protein>